<proteinExistence type="evidence at protein level"/>
<feature type="peptide" id="PRO_0000378910" description="Dermaseptin DRS-DI4-like peptide" evidence="3">
    <location>
        <begin position="1"/>
        <end position="28"/>
    </location>
</feature>
<name>DMS4_PHYBU</name>
<protein>
    <recommendedName>
        <fullName evidence="4">Dermaseptin DRS-DI4-like peptide</fullName>
    </recommendedName>
</protein>
<keyword id="KW-0878">Amphibian defense peptide</keyword>
<keyword id="KW-0044">Antibiotic</keyword>
<keyword id="KW-0929">Antimicrobial</keyword>
<keyword id="KW-0903">Direct protein sequencing</keyword>
<keyword id="KW-0964">Secreted</keyword>
<evidence type="ECO:0000250" key="1">
    <source>
        <dbReference type="UniProtKB" id="P81485"/>
    </source>
</evidence>
<evidence type="ECO:0000255" key="2"/>
<evidence type="ECO:0000269" key="3">
    <source ref="1"/>
</evidence>
<evidence type="ECO:0000303" key="4">
    <source ref="1"/>
</evidence>
<evidence type="ECO:0000305" key="5"/>
<accession>P86279</accession>
<comment type="function">
    <text evidence="1">Possesses a potent antimicrobial activity against Gram-positive and Gram-negative bacteria. Probably acts by disturbing membrane functions with its amphipathic structure (By similarity).</text>
</comment>
<comment type="subcellular location">
    <subcellularLocation>
        <location evidence="3">Secreted</location>
    </subcellularLocation>
</comment>
<comment type="tissue specificity">
    <text evidence="3">Expressed by the skin glands.</text>
</comment>
<comment type="mass spectrometry" mass="2778.47" method="Electrospray" evidence="3"/>
<comment type="similarity">
    <text evidence="2">Belongs to the frog skin active peptide (FSAP) family. Dermaseptin subfamily.</text>
</comment>
<dbReference type="GO" id="GO:0005576">
    <property type="term" value="C:extracellular region"/>
    <property type="evidence" value="ECO:0007669"/>
    <property type="project" value="UniProtKB-SubCell"/>
</dbReference>
<dbReference type="GO" id="GO:0042742">
    <property type="term" value="P:defense response to bacterium"/>
    <property type="evidence" value="ECO:0007669"/>
    <property type="project" value="UniProtKB-KW"/>
</dbReference>
<dbReference type="InterPro" id="IPR022731">
    <property type="entry name" value="Dermaseptin_dom"/>
</dbReference>
<dbReference type="Pfam" id="PF12121">
    <property type="entry name" value="DD_K"/>
    <property type="match status" value="1"/>
</dbReference>
<sequence length="28" mass="2780">ALWKNMLKGIGKLAGQAALGAVKTLVGA</sequence>
<organism>
    <name type="scientific">Phyllomedusa burmeisteri</name>
    <name type="common">Brazilian common walking leaf frog</name>
    <dbReference type="NCBI Taxonomy" id="39413"/>
    <lineage>
        <taxon>Eukaryota</taxon>
        <taxon>Metazoa</taxon>
        <taxon>Chordata</taxon>
        <taxon>Craniata</taxon>
        <taxon>Vertebrata</taxon>
        <taxon>Euteleostomi</taxon>
        <taxon>Amphibia</taxon>
        <taxon>Batrachia</taxon>
        <taxon>Anura</taxon>
        <taxon>Neobatrachia</taxon>
        <taxon>Hyloidea</taxon>
        <taxon>Hylidae</taxon>
        <taxon>Phyllomedusinae</taxon>
        <taxon>Phyllomedusa</taxon>
    </lineage>
</organism>
<reference evidence="5" key="1">
    <citation type="submission" date="2009-04" db="UniProtKB">
        <title>Identification of peptides from Phyllomedusa burmesteri skin secretomics by nano LC MS/MS.</title>
        <authorList>
            <person name="Conceicao K."/>
            <person name="Klitzke C.F."/>
            <person name="Brito R.C."/>
            <person name="Andrade D.F."/>
            <person name="Junca F.A."/>
            <person name="Biondi I."/>
            <person name="Lopes-Ferreira M."/>
        </authorList>
    </citation>
    <scope>PROTEIN SEQUENCE</scope>
    <scope>SUBCELLULAR LOCATION</scope>
    <scope>TISSUE SPECIFICITY</scope>
    <scope>MASS SPECTROMETRY</scope>
    <source>
        <tissue evidence="3">Skin secretion</tissue>
    </source>
</reference>